<proteinExistence type="evidence at transcript level"/>
<comment type="function">
    <text evidence="1">May play a role in the reorganization of neuronal actin structure.</text>
</comment>
<comment type="subcellular location">
    <subcellularLocation>
        <location evidence="1">Cytoplasm</location>
        <location evidence="1">Cytoskeleton</location>
    </subcellularLocation>
</comment>
<comment type="similarity">
    <text evidence="3">Belongs to the WD repeat coronin family.</text>
</comment>
<reference key="1">
    <citation type="submission" date="2004-06" db="EMBL/GenBank/DDBJ databases">
        <authorList>
            <consortium name="NIH - Xenopus Gene Collection (XGC) project"/>
        </authorList>
    </citation>
    <scope>NUCLEOTIDE SEQUENCE [LARGE SCALE MRNA]</scope>
    <source>
        <tissue>Eye</tissue>
        <tissue>Tadpole</tissue>
    </source>
</reference>
<protein>
    <recommendedName>
        <fullName>Coronin-2B</fullName>
    </recommendedName>
</protein>
<evidence type="ECO:0000250" key="1"/>
<evidence type="ECO:0000255" key="2"/>
<evidence type="ECO:0000305" key="3"/>
<feature type="chain" id="PRO_0000379778" description="Coronin-2B">
    <location>
        <begin position="1"/>
        <end position="475"/>
    </location>
</feature>
<feature type="repeat" description="WD 1">
    <location>
        <begin position="80"/>
        <end position="120"/>
    </location>
</feature>
<feature type="repeat" description="WD 2">
    <location>
        <begin position="130"/>
        <end position="172"/>
    </location>
</feature>
<feature type="repeat" description="WD 3">
    <location>
        <begin position="174"/>
        <end position="212"/>
    </location>
</feature>
<feature type="repeat" description="WD 4">
    <location>
        <begin position="215"/>
        <end position="258"/>
    </location>
</feature>
<feature type="repeat" description="WD 5">
    <location>
        <begin position="260"/>
        <end position="303"/>
    </location>
</feature>
<feature type="coiled-coil region" evidence="2">
    <location>
        <begin position="431"/>
        <end position="470"/>
    </location>
</feature>
<accession>Q6DJD8</accession>
<dbReference type="EMBL" id="BC075242">
    <property type="protein sequence ID" value="AAH75242.1"/>
    <property type="molecule type" value="mRNA"/>
</dbReference>
<dbReference type="EMBL" id="BC081222">
    <property type="protein sequence ID" value="AAH81222.1"/>
    <property type="molecule type" value="mRNA"/>
</dbReference>
<dbReference type="RefSeq" id="NP_001086406.1">
    <property type="nucleotide sequence ID" value="NM_001092937.1"/>
</dbReference>
<dbReference type="SMR" id="Q6DJD8"/>
<dbReference type="DNASU" id="444835"/>
<dbReference type="GeneID" id="444835"/>
<dbReference type="KEGG" id="xla:444835"/>
<dbReference type="AGR" id="Xenbase:XB-GENE-1014768"/>
<dbReference type="CTD" id="444835"/>
<dbReference type="Xenbase" id="XB-GENE-1014768">
    <property type="gene designation" value="coro2b.L"/>
</dbReference>
<dbReference type="OrthoDB" id="1850764at2759"/>
<dbReference type="Proteomes" id="UP000186698">
    <property type="component" value="Chromosome 3L"/>
</dbReference>
<dbReference type="Bgee" id="444835">
    <property type="expression patterns" value="Expressed in camera-type eye and 17 other cell types or tissues"/>
</dbReference>
<dbReference type="GO" id="GO:0005737">
    <property type="term" value="C:cytoplasm"/>
    <property type="evidence" value="ECO:0007669"/>
    <property type="project" value="UniProtKB-KW"/>
</dbReference>
<dbReference type="GO" id="GO:0005856">
    <property type="term" value="C:cytoskeleton"/>
    <property type="evidence" value="ECO:0007669"/>
    <property type="project" value="UniProtKB-SubCell"/>
</dbReference>
<dbReference type="GO" id="GO:0051015">
    <property type="term" value="F:actin filament binding"/>
    <property type="evidence" value="ECO:0000318"/>
    <property type="project" value="GO_Central"/>
</dbReference>
<dbReference type="FunFam" id="2.130.10.10:FF:000053">
    <property type="entry name" value="Coronin"/>
    <property type="match status" value="1"/>
</dbReference>
<dbReference type="Gene3D" id="2.130.10.10">
    <property type="entry name" value="YVTN repeat-like/Quinoprotein amine dehydrogenase"/>
    <property type="match status" value="1"/>
</dbReference>
<dbReference type="InterPro" id="IPR015505">
    <property type="entry name" value="Coronin"/>
</dbReference>
<dbReference type="InterPro" id="IPR015048">
    <property type="entry name" value="DUF1899"/>
</dbReference>
<dbReference type="InterPro" id="IPR015943">
    <property type="entry name" value="WD40/YVTN_repeat-like_dom_sf"/>
</dbReference>
<dbReference type="InterPro" id="IPR019775">
    <property type="entry name" value="WD40_repeat_CS"/>
</dbReference>
<dbReference type="InterPro" id="IPR036322">
    <property type="entry name" value="WD40_repeat_dom_sf"/>
</dbReference>
<dbReference type="InterPro" id="IPR001680">
    <property type="entry name" value="WD40_rpt"/>
</dbReference>
<dbReference type="PANTHER" id="PTHR10856">
    <property type="entry name" value="CORONIN"/>
    <property type="match status" value="1"/>
</dbReference>
<dbReference type="PANTHER" id="PTHR10856:SF17">
    <property type="entry name" value="CORONIN-2B"/>
    <property type="match status" value="1"/>
</dbReference>
<dbReference type="Pfam" id="PF08953">
    <property type="entry name" value="DUF1899"/>
    <property type="match status" value="1"/>
</dbReference>
<dbReference type="Pfam" id="PF00400">
    <property type="entry name" value="WD40"/>
    <property type="match status" value="2"/>
</dbReference>
<dbReference type="Pfam" id="PF16300">
    <property type="entry name" value="WD40_4"/>
    <property type="match status" value="1"/>
</dbReference>
<dbReference type="SMART" id="SM01166">
    <property type="entry name" value="DUF1899"/>
    <property type="match status" value="1"/>
</dbReference>
<dbReference type="SMART" id="SM01167">
    <property type="entry name" value="DUF1900"/>
    <property type="match status" value="1"/>
</dbReference>
<dbReference type="SMART" id="SM00320">
    <property type="entry name" value="WD40"/>
    <property type="match status" value="4"/>
</dbReference>
<dbReference type="SUPFAM" id="SSF50978">
    <property type="entry name" value="WD40 repeat-like"/>
    <property type="match status" value="1"/>
</dbReference>
<dbReference type="PROSITE" id="PS00678">
    <property type="entry name" value="WD_REPEATS_1"/>
    <property type="match status" value="2"/>
</dbReference>
<dbReference type="PROSITE" id="PS50082">
    <property type="entry name" value="WD_REPEATS_2"/>
    <property type="match status" value="3"/>
</dbReference>
<dbReference type="PROSITE" id="PS50294">
    <property type="entry name" value="WD_REPEATS_REGION"/>
    <property type="match status" value="1"/>
</dbReference>
<organism>
    <name type="scientific">Xenopus laevis</name>
    <name type="common">African clawed frog</name>
    <dbReference type="NCBI Taxonomy" id="8355"/>
    <lineage>
        <taxon>Eukaryota</taxon>
        <taxon>Metazoa</taxon>
        <taxon>Chordata</taxon>
        <taxon>Craniata</taxon>
        <taxon>Vertebrata</taxon>
        <taxon>Euteleostomi</taxon>
        <taxon>Amphibia</taxon>
        <taxon>Batrachia</taxon>
        <taxon>Anura</taxon>
        <taxon>Pipoidea</taxon>
        <taxon>Pipidae</taxon>
        <taxon>Xenopodinae</taxon>
        <taxon>Xenopus</taxon>
        <taxon>Xenopus</taxon>
    </lineage>
</organism>
<name>COR2B_XENLA</name>
<gene>
    <name type="primary">coro2b</name>
</gene>
<keyword id="KW-0009">Actin-binding</keyword>
<keyword id="KW-0175">Coiled coil</keyword>
<keyword id="KW-0963">Cytoplasm</keyword>
<keyword id="KW-0206">Cytoskeleton</keyword>
<keyword id="KW-1185">Reference proteome</keyword>
<keyword id="KW-0677">Repeat</keyword>
<keyword id="KW-0853">WD repeat</keyword>
<sequence length="475" mass="54499">MSWRPQYRCSKFRNVYGKVASRENCYDCIPITKNVHDNHFCAVNPKFLAIVTESAGGGSFFVIPLHQTGRIEPNYPKVCGHQGTVLDIKWNPFIENIIASCSEDTSVRIWEIPDGGLKRNMTEAVLELYGHSRRVGLIEWHPTAINILFSAGYDYKILIWNLDVGEAVKMIDCHTDVILCMSFNTDGSLMATTCKDKKLRVLEPRSGRVLQETTCKNHKVTRVVFFGDMKRLLTTGVSKWNTRQIALWDQEDLSMPVTEEEIDGLSGLLFPFYDVDTHMLYLAGKGDGNIRYYEITAEKPYLTYLMEFRSPAPQKGLGVMPKHGLDVSACEIFRFYKLVTLKNQIEPISMIVPRRSENYQEDIYPMTSGTEPALSPDEWLRGVNKGPVLMSLKEGYRKENKAIYKAPVKEKKSLVVNGIDLLENVPPRTENELLRMFFKQQEEIRRLKEQLSQRDLLVRQLELELKNLRNSPKDS</sequence>